<feature type="signal peptide" evidence="1">
    <location>
        <begin position="1"/>
        <end position="12"/>
    </location>
</feature>
<feature type="chain" id="PRO_0000270026" description="Chaperone SurA">
    <location>
        <begin position="13"/>
        <end position="417"/>
    </location>
</feature>
<feature type="domain" description="PpiC 1" evidence="1">
    <location>
        <begin position="163"/>
        <end position="264"/>
    </location>
</feature>
<feature type="domain" description="PpiC 2" evidence="1">
    <location>
        <begin position="273"/>
        <end position="372"/>
    </location>
</feature>
<protein>
    <recommendedName>
        <fullName evidence="1">Chaperone SurA</fullName>
    </recommendedName>
    <alternativeName>
        <fullName evidence="1">Peptidyl-prolyl cis-trans isomerase SurA</fullName>
        <shortName evidence="1">PPIase SurA</shortName>
        <ecNumber evidence="1">5.2.1.8</ecNumber>
    </alternativeName>
    <alternativeName>
        <fullName evidence="1">Rotamase SurA</fullName>
    </alternativeName>
</protein>
<organism>
    <name type="scientific">Pseudomonas aeruginosa (strain ATCC 15692 / DSM 22644 / CIP 104116 / JCM 14847 / LMG 12228 / 1C / PRS 101 / PAO1)</name>
    <dbReference type="NCBI Taxonomy" id="208964"/>
    <lineage>
        <taxon>Bacteria</taxon>
        <taxon>Pseudomonadati</taxon>
        <taxon>Pseudomonadota</taxon>
        <taxon>Gammaproteobacteria</taxon>
        <taxon>Pseudomonadales</taxon>
        <taxon>Pseudomonadaceae</taxon>
        <taxon>Pseudomonas</taxon>
    </lineage>
</organism>
<evidence type="ECO:0000255" key="1">
    <source>
        <dbReference type="HAMAP-Rule" id="MF_01183"/>
    </source>
</evidence>
<evidence type="ECO:0000305" key="2"/>
<dbReference type="EC" id="5.2.1.8" evidence="1"/>
<dbReference type="EMBL" id="AE004091">
    <property type="protein sequence ID" value="AAG03983.1"/>
    <property type="status" value="ALT_INIT"/>
    <property type="molecule type" value="Genomic_DNA"/>
</dbReference>
<dbReference type="PIR" id="B83572">
    <property type="entry name" value="B83572"/>
</dbReference>
<dbReference type="RefSeq" id="NP_249285.1">
    <property type="nucleotide sequence ID" value="NC_002516.2"/>
</dbReference>
<dbReference type="SMR" id="Q9I5U3"/>
<dbReference type="FunCoup" id="Q9I5U3">
    <property type="interactions" value="218"/>
</dbReference>
<dbReference type="STRING" id="208964.PA0594"/>
<dbReference type="PaxDb" id="208964-PA0594"/>
<dbReference type="GeneID" id="879552"/>
<dbReference type="KEGG" id="pae:PA0594"/>
<dbReference type="PATRIC" id="fig|208964.12.peg.630"/>
<dbReference type="PseudoCAP" id="PA0594"/>
<dbReference type="HOGENOM" id="CLU_034646_11_0_6"/>
<dbReference type="InParanoid" id="Q9I5U3"/>
<dbReference type="OrthoDB" id="14196at2"/>
<dbReference type="PhylomeDB" id="Q9I5U3"/>
<dbReference type="Proteomes" id="UP000002438">
    <property type="component" value="Chromosome"/>
</dbReference>
<dbReference type="GO" id="GO:0030288">
    <property type="term" value="C:outer membrane-bounded periplasmic space"/>
    <property type="evidence" value="ECO:0000318"/>
    <property type="project" value="GO_Central"/>
</dbReference>
<dbReference type="GO" id="GO:0042277">
    <property type="term" value="F:peptide binding"/>
    <property type="evidence" value="ECO:0007669"/>
    <property type="project" value="InterPro"/>
</dbReference>
<dbReference type="GO" id="GO:0003755">
    <property type="term" value="F:peptidyl-prolyl cis-trans isomerase activity"/>
    <property type="evidence" value="ECO:0000318"/>
    <property type="project" value="GO_Central"/>
</dbReference>
<dbReference type="GO" id="GO:0051082">
    <property type="term" value="F:unfolded protein binding"/>
    <property type="evidence" value="ECO:0000318"/>
    <property type="project" value="GO_Central"/>
</dbReference>
<dbReference type="GO" id="GO:0061077">
    <property type="term" value="P:chaperone-mediated protein folding"/>
    <property type="evidence" value="ECO:0000318"/>
    <property type="project" value="GO_Central"/>
</dbReference>
<dbReference type="GO" id="GO:0043165">
    <property type="term" value="P:Gram-negative-bacterium-type cell outer membrane assembly"/>
    <property type="evidence" value="ECO:0007669"/>
    <property type="project" value="InterPro"/>
</dbReference>
<dbReference type="GO" id="GO:0050821">
    <property type="term" value="P:protein stabilization"/>
    <property type="evidence" value="ECO:0007669"/>
    <property type="project" value="InterPro"/>
</dbReference>
<dbReference type="Gene3D" id="3.10.50.40">
    <property type="match status" value="2"/>
</dbReference>
<dbReference type="Gene3D" id="1.10.4030.10">
    <property type="entry name" value="Porin chaperone SurA, peptide-binding domain"/>
    <property type="match status" value="1"/>
</dbReference>
<dbReference type="HAMAP" id="MF_01183">
    <property type="entry name" value="Chaperone_SurA"/>
    <property type="match status" value="1"/>
</dbReference>
<dbReference type="InterPro" id="IPR050280">
    <property type="entry name" value="OMP_Chaperone_SurA"/>
</dbReference>
<dbReference type="InterPro" id="IPR046357">
    <property type="entry name" value="PPIase_dom_sf"/>
</dbReference>
<dbReference type="InterPro" id="IPR000297">
    <property type="entry name" value="PPIase_PpiC"/>
</dbReference>
<dbReference type="InterPro" id="IPR023034">
    <property type="entry name" value="PPIase_SurA"/>
</dbReference>
<dbReference type="InterPro" id="IPR015391">
    <property type="entry name" value="SurA_N"/>
</dbReference>
<dbReference type="InterPro" id="IPR027304">
    <property type="entry name" value="Trigger_fact/SurA_dom_sf"/>
</dbReference>
<dbReference type="PANTHER" id="PTHR47637">
    <property type="entry name" value="CHAPERONE SURA"/>
    <property type="match status" value="1"/>
</dbReference>
<dbReference type="PANTHER" id="PTHR47637:SF1">
    <property type="entry name" value="CHAPERONE SURA"/>
    <property type="match status" value="1"/>
</dbReference>
<dbReference type="Pfam" id="PF00639">
    <property type="entry name" value="Rotamase"/>
    <property type="match status" value="1"/>
</dbReference>
<dbReference type="Pfam" id="PF13616">
    <property type="entry name" value="Rotamase_3"/>
    <property type="match status" value="1"/>
</dbReference>
<dbReference type="Pfam" id="PF09312">
    <property type="entry name" value="SurA_N"/>
    <property type="match status" value="1"/>
</dbReference>
<dbReference type="SUPFAM" id="SSF54534">
    <property type="entry name" value="FKBP-like"/>
    <property type="match status" value="2"/>
</dbReference>
<dbReference type="SUPFAM" id="SSF109998">
    <property type="entry name" value="Triger factor/SurA peptide-binding domain-like"/>
    <property type="match status" value="1"/>
</dbReference>
<dbReference type="PROSITE" id="PS50198">
    <property type="entry name" value="PPIC_PPIASE_2"/>
    <property type="match status" value="2"/>
</dbReference>
<reference key="1">
    <citation type="journal article" date="2000" name="Nature">
        <title>Complete genome sequence of Pseudomonas aeruginosa PAO1, an opportunistic pathogen.</title>
        <authorList>
            <person name="Stover C.K."/>
            <person name="Pham X.-Q.T."/>
            <person name="Erwin A.L."/>
            <person name="Mizoguchi S.D."/>
            <person name="Warrener P."/>
            <person name="Hickey M.J."/>
            <person name="Brinkman F.S.L."/>
            <person name="Hufnagle W.O."/>
            <person name="Kowalik D.J."/>
            <person name="Lagrou M."/>
            <person name="Garber R.L."/>
            <person name="Goltry L."/>
            <person name="Tolentino E."/>
            <person name="Westbrock-Wadman S."/>
            <person name="Yuan Y."/>
            <person name="Brody L.L."/>
            <person name="Coulter S.N."/>
            <person name="Folger K.R."/>
            <person name="Kas A."/>
            <person name="Larbig K."/>
            <person name="Lim R.M."/>
            <person name="Smith K.A."/>
            <person name="Spencer D.H."/>
            <person name="Wong G.K.-S."/>
            <person name="Wu Z."/>
            <person name="Paulsen I.T."/>
            <person name="Reizer J."/>
            <person name="Saier M.H. Jr."/>
            <person name="Hancock R.E.W."/>
            <person name="Lory S."/>
            <person name="Olson M.V."/>
        </authorList>
    </citation>
    <scope>NUCLEOTIDE SEQUENCE [LARGE SCALE GENOMIC DNA]</scope>
    <source>
        <strain>ATCC 15692 / DSM 22644 / CIP 104116 / JCM 14847 / LMG 12228 / 1C / PRS 101 / PAO1</strain>
    </source>
</reference>
<proteinExistence type="inferred from homology"/>
<comment type="function">
    <text evidence="1">Chaperone involved in the correct folding and assembly of outer membrane proteins. Recognizes specific patterns of aromatic residues and the orientation of their side chains, which are found more frequently in integral outer membrane proteins. May act in both early periplasmic and late outer membrane-associated steps of protein maturation.</text>
</comment>
<comment type="catalytic activity">
    <reaction evidence="1">
        <text>[protein]-peptidylproline (omega=180) = [protein]-peptidylproline (omega=0)</text>
        <dbReference type="Rhea" id="RHEA:16237"/>
        <dbReference type="Rhea" id="RHEA-COMP:10747"/>
        <dbReference type="Rhea" id="RHEA-COMP:10748"/>
        <dbReference type="ChEBI" id="CHEBI:83833"/>
        <dbReference type="ChEBI" id="CHEBI:83834"/>
        <dbReference type="EC" id="5.2.1.8"/>
    </reaction>
</comment>
<comment type="subcellular location">
    <subcellularLocation>
        <location evidence="1">Periplasm</location>
    </subcellularLocation>
    <text evidence="1">Is capable of associating with the outer membrane.</text>
</comment>
<comment type="domain">
    <text evidence="1">The PPIase activity resides only in the second parvulin domain. The N-terminal region and the C-terminal tail are necessary and sufficient for the chaperone activity of SurA. The PPIase activity is dispensable for SurA to function as a chaperone. The N-terminal region and the C-terminal tail are also required for porin recognition.</text>
</comment>
<comment type="sequence caution" evidence="2">
    <conflict type="erroneous initiation">
        <sequence resource="EMBL-CDS" id="AAG03983"/>
    </conflict>
</comment>
<keyword id="KW-0143">Chaperone</keyword>
<keyword id="KW-0413">Isomerase</keyword>
<keyword id="KW-0574">Periplasm</keyword>
<keyword id="KW-1185">Reference proteome</keyword>
<keyword id="KW-0677">Repeat</keyword>
<keyword id="KW-0697">Rotamase</keyword>
<keyword id="KW-0732">Signal</keyword>
<accession>Q9I5U3</accession>
<gene>
    <name evidence="1" type="primary">surA</name>
    <name type="ordered locus">PA0594</name>
</gene>
<sequence>MGAALLCSFAHAEVVPLDRVVAIVDNDVIMQSQLDQRLREVHQTLLKRGAPLPPEHVLTQQVLERLIIENIQQQIGDRSGIRISDEELNQAMGTIAQRNGMSLEQFQTALTRDGLSYADAREQVRREMVISRVRQRRVAERIQVSEQEVKNFLASDMGKIQLSEEYRLANILIPVPEAASSDVIQAAARQAQELYQQLKQGADFGQLAISRSAGDNALEGGEIGWRKAAQLPQPFDSMIGSLAVGDVTEPVRTPGGFIILKLEEKRGGSKMVRDEVHVRHILLKPSEIRSEAETEKLAQKLYERIQSGEDFGELAKSFSEDPGSALNGGDLNWIDPEALVPEFRQVMNDTPQGELSKPFRSQFGWHILQVLGRRATDSSEKFREQQAVSVLRNRKYDEELQAWLRQIRDEAYVEIKQ</sequence>
<name>SURA_PSEAE</name>